<dbReference type="EMBL" id="CP001144">
    <property type="protein sequence ID" value="ACH75273.1"/>
    <property type="molecule type" value="Genomic_DNA"/>
</dbReference>
<dbReference type="RefSeq" id="WP_000156283.1">
    <property type="nucleotide sequence ID" value="NC_011205.1"/>
</dbReference>
<dbReference type="KEGG" id="sed:SeD_A1483"/>
<dbReference type="HOGENOM" id="CLU_133645_0_0_6"/>
<dbReference type="Proteomes" id="UP000008322">
    <property type="component" value="Chromosome"/>
</dbReference>
<dbReference type="GO" id="GO:0005886">
    <property type="term" value="C:plasma membrane"/>
    <property type="evidence" value="ECO:0007669"/>
    <property type="project" value="UniProtKB-SubCell"/>
</dbReference>
<dbReference type="HAMAP" id="MF_01071">
    <property type="entry name" value="UPF0266"/>
    <property type="match status" value="1"/>
</dbReference>
<dbReference type="InterPro" id="IPR009328">
    <property type="entry name" value="DUF986"/>
</dbReference>
<dbReference type="NCBIfam" id="NF002791">
    <property type="entry name" value="PRK02913.1"/>
    <property type="match status" value="1"/>
</dbReference>
<dbReference type="Pfam" id="PF06173">
    <property type="entry name" value="DUF986"/>
    <property type="match status" value="1"/>
</dbReference>
<dbReference type="PIRSF" id="PIRSF020687">
    <property type="entry name" value="UCP020687"/>
    <property type="match status" value="1"/>
</dbReference>
<name>YOBD_SALDC</name>
<reference key="1">
    <citation type="journal article" date="2011" name="J. Bacteriol.">
        <title>Comparative genomics of 28 Salmonella enterica isolates: evidence for CRISPR-mediated adaptive sublineage evolution.</title>
        <authorList>
            <person name="Fricke W.F."/>
            <person name="Mammel M.K."/>
            <person name="McDermott P.F."/>
            <person name="Tartera C."/>
            <person name="White D.G."/>
            <person name="Leclerc J.E."/>
            <person name="Ravel J."/>
            <person name="Cebula T.A."/>
        </authorList>
    </citation>
    <scope>NUCLEOTIDE SEQUENCE [LARGE SCALE GENOMIC DNA]</scope>
    <source>
        <strain>CT_02021853</strain>
    </source>
</reference>
<organism>
    <name type="scientific">Salmonella dublin (strain CT_02021853)</name>
    <dbReference type="NCBI Taxonomy" id="439851"/>
    <lineage>
        <taxon>Bacteria</taxon>
        <taxon>Pseudomonadati</taxon>
        <taxon>Pseudomonadota</taxon>
        <taxon>Gammaproteobacteria</taxon>
        <taxon>Enterobacterales</taxon>
        <taxon>Enterobacteriaceae</taxon>
        <taxon>Salmonella</taxon>
    </lineage>
</organism>
<feature type="chain" id="PRO_1000136646" description="UPF0266 membrane protein YobD">
    <location>
        <begin position="1"/>
        <end position="152"/>
    </location>
</feature>
<feature type="transmembrane region" description="Helical" evidence="1">
    <location>
        <begin position="6"/>
        <end position="26"/>
    </location>
</feature>
<feature type="transmembrane region" description="Helical" evidence="1">
    <location>
        <begin position="45"/>
        <end position="65"/>
    </location>
</feature>
<feature type="transmembrane region" description="Helical" evidence="1">
    <location>
        <begin position="67"/>
        <end position="87"/>
    </location>
</feature>
<proteinExistence type="inferred from homology"/>
<keyword id="KW-0997">Cell inner membrane</keyword>
<keyword id="KW-1003">Cell membrane</keyword>
<keyword id="KW-0472">Membrane</keyword>
<keyword id="KW-0812">Transmembrane</keyword>
<keyword id="KW-1133">Transmembrane helix</keyword>
<evidence type="ECO:0000255" key="1">
    <source>
        <dbReference type="HAMAP-Rule" id="MF_01071"/>
    </source>
</evidence>
<comment type="subcellular location">
    <subcellularLocation>
        <location evidence="1">Cell inner membrane</location>
        <topology evidence="1">Multi-pass membrane protein</topology>
    </subcellularLocation>
</comment>
<comment type="similarity">
    <text evidence="1">Belongs to the UPF0266 family.</text>
</comment>
<gene>
    <name evidence="1" type="primary">yobD</name>
    <name type="ordered locus">SeD_A1483</name>
</gene>
<protein>
    <recommendedName>
        <fullName evidence="1">UPF0266 membrane protein YobD</fullName>
    </recommendedName>
</protein>
<accession>B5FTK0</accession>
<sequence length="152" mass="17782">MTITDLVLILFIAALLAYALYDQFIMPRRNGPTLLSIALLRRGRVDSVIFVGLVAILIYNNVTSHGAQMTTWLLSALALMGFYIFWIRTPRIIFKQRGFFFANVWIEYNRIKEMNLSEDGVLVMQLEQRRLLIRVRNIDNLEKIYKLIIENQ</sequence>